<sequence length="458" mass="50244">MSGQTIFDKLWNQHVIAGQEGEPQLLYIDLHVIHEVTSPQAFQGLRDAGRSVRRRDLTYGTLDHNVPTKDIFNIQDLISKKQIDTFTKNVKEFGIPAEAHGGKGQGIVHMVAPESGRTQPGKIIVCGDSHTATNGAFGAIAFGIGTSEVEHVLATQTIWQVKPKRMKIEFQGHPQKGVYSKDFILALIAKYGVDAGVGYAVEYTGNAISDLSMEERMTICNMSIEFGAKMGLMNPDEKTYDYVKGREYAPKDFDEAVSKWEKLVSDSDAVYDKVLTLDVSQLKPMVTWGTNPGMGLEFGEEFPKINDDLNYERAYQYMDLKPGQTASDIDLGYIFIGSCTNARLGDLEEAAKIIKGNHIADGLTGIVVPGSRPVKRAAEELGLDKIFKDAGFEWREPGCSACLGMNPDQIPAYVHCASTSNRNFEGRQGHNARTHLCSPAMAAAAAISGKFVDVREIV</sequence>
<feature type="chain" id="PRO_1000063565" description="3-isopropylmalate dehydratase large subunit">
    <location>
        <begin position="1"/>
        <end position="458"/>
    </location>
</feature>
<feature type="binding site" evidence="1">
    <location>
        <position position="339"/>
    </location>
    <ligand>
        <name>[4Fe-4S] cluster</name>
        <dbReference type="ChEBI" id="CHEBI:49883"/>
    </ligand>
</feature>
<feature type="binding site" evidence="1">
    <location>
        <position position="399"/>
    </location>
    <ligand>
        <name>[4Fe-4S] cluster</name>
        <dbReference type="ChEBI" id="CHEBI:49883"/>
    </ligand>
</feature>
<feature type="binding site" evidence="1">
    <location>
        <position position="402"/>
    </location>
    <ligand>
        <name>[4Fe-4S] cluster</name>
        <dbReference type="ChEBI" id="CHEBI:49883"/>
    </ligand>
</feature>
<dbReference type="EC" id="4.2.1.33" evidence="1"/>
<dbReference type="EMBL" id="AM406671">
    <property type="protein sequence ID" value="CAL97877.1"/>
    <property type="molecule type" value="Genomic_DNA"/>
</dbReference>
<dbReference type="RefSeq" id="WP_011835163.1">
    <property type="nucleotide sequence ID" value="NC_009004.1"/>
</dbReference>
<dbReference type="SMR" id="A2RKR3"/>
<dbReference type="STRING" id="416870.llmg_1284"/>
<dbReference type="KEGG" id="llm:llmg_1284"/>
<dbReference type="eggNOG" id="COG0065">
    <property type="taxonomic scope" value="Bacteria"/>
</dbReference>
<dbReference type="HOGENOM" id="CLU_006714_3_4_9"/>
<dbReference type="OrthoDB" id="9802769at2"/>
<dbReference type="PhylomeDB" id="A2RKR3"/>
<dbReference type="UniPathway" id="UPA00048">
    <property type="reaction ID" value="UER00071"/>
</dbReference>
<dbReference type="Proteomes" id="UP000000364">
    <property type="component" value="Chromosome"/>
</dbReference>
<dbReference type="GO" id="GO:0003861">
    <property type="term" value="F:3-isopropylmalate dehydratase activity"/>
    <property type="evidence" value="ECO:0007669"/>
    <property type="project" value="UniProtKB-UniRule"/>
</dbReference>
<dbReference type="GO" id="GO:0051539">
    <property type="term" value="F:4 iron, 4 sulfur cluster binding"/>
    <property type="evidence" value="ECO:0007669"/>
    <property type="project" value="UniProtKB-KW"/>
</dbReference>
<dbReference type="GO" id="GO:0046872">
    <property type="term" value="F:metal ion binding"/>
    <property type="evidence" value="ECO:0007669"/>
    <property type="project" value="UniProtKB-KW"/>
</dbReference>
<dbReference type="GO" id="GO:0009098">
    <property type="term" value="P:L-leucine biosynthetic process"/>
    <property type="evidence" value="ECO:0007669"/>
    <property type="project" value="UniProtKB-UniRule"/>
</dbReference>
<dbReference type="CDD" id="cd01583">
    <property type="entry name" value="IPMI"/>
    <property type="match status" value="1"/>
</dbReference>
<dbReference type="Gene3D" id="3.30.499.10">
    <property type="entry name" value="Aconitase, domain 3"/>
    <property type="match status" value="2"/>
</dbReference>
<dbReference type="HAMAP" id="MF_01026">
    <property type="entry name" value="LeuC_type1"/>
    <property type="match status" value="1"/>
</dbReference>
<dbReference type="InterPro" id="IPR004430">
    <property type="entry name" value="3-IsopropMal_deHydase_lsu"/>
</dbReference>
<dbReference type="InterPro" id="IPR015931">
    <property type="entry name" value="Acnase/IPM_dHydase_lsu_aba_1/3"/>
</dbReference>
<dbReference type="InterPro" id="IPR001030">
    <property type="entry name" value="Acoase/IPM_deHydtase_lsu_aba"/>
</dbReference>
<dbReference type="InterPro" id="IPR018136">
    <property type="entry name" value="Aconitase_4Fe-4S_BS"/>
</dbReference>
<dbReference type="InterPro" id="IPR036008">
    <property type="entry name" value="Aconitase_4Fe-4S_dom"/>
</dbReference>
<dbReference type="InterPro" id="IPR050067">
    <property type="entry name" value="IPM_dehydratase_rel_enz"/>
</dbReference>
<dbReference type="InterPro" id="IPR033941">
    <property type="entry name" value="IPMI_cat"/>
</dbReference>
<dbReference type="NCBIfam" id="TIGR00170">
    <property type="entry name" value="leuC"/>
    <property type="match status" value="1"/>
</dbReference>
<dbReference type="NCBIfam" id="NF004016">
    <property type="entry name" value="PRK05478.1"/>
    <property type="match status" value="1"/>
</dbReference>
<dbReference type="NCBIfam" id="NF009116">
    <property type="entry name" value="PRK12466.1"/>
    <property type="match status" value="1"/>
</dbReference>
<dbReference type="PANTHER" id="PTHR43822:SF9">
    <property type="entry name" value="3-ISOPROPYLMALATE DEHYDRATASE"/>
    <property type="match status" value="1"/>
</dbReference>
<dbReference type="PANTHER" id="PTHR43822">
    <property type="entry name" value="HOMOACONITASE, MITOCHONDRIAL-RELATED"/>
    <property type="match status" value="1"/>
</dbReference>
<dbReference type="Pfam" id="PF00330">
    <property type="entry name" value="Aconitase"/>
    <property type="match status" value="1"/>
</dbReference>
<dbReference type="PRINTS" id="PR00415">
    <property type="entry name" value="ACONITASE"/>
</dbReference>
<dbReference type="SUPFAM" id="SSF53732">
    <property type="entry name" value="Aconitase iron-sulfur domain"/>
    <property type="match status" value="1"/>
</dbReference>
<dbReference type="PROSITE" id="PS00450">
    <property type="entry name" value="ACONITASE_1"/>
    <property type="match status" value="1"/>
</dbReference>
<dbReference type="PROSITE" id="PS01244">
    <property type="entry name" value="ACONITASE_2"/>
    <property type="match status" value="1"/>
</dbReference>
<reference key="1">
    <citation type="journal article" date="2007" name="J. Bacteriol.">
        <title>The complete genome sequence of the lactic acid bacterial paradigm Lactococcus lactis subsp. cremoris MG1363.</title>
        <authorList>
            <person name="Wegmann U."/>
            <person name="O'Connell-Motherway M."/>
            <person name="Zomer A."/>
            <person name="Buist G."/>
            <person name="Shearman C."/>
            <person name="Canchaya C."/>
            <person name="Ventura M."/>
            <person name="Goesmann A."/>
            <person name="Gasson M.J."/>
            <person name="Kuipers O.P."/>
            <person name="van Sinderen D."/>
            <person name="Kok J."/>
        </authorList>
    </citation>
    <scope>NUCLEOTIDE SEQUENCE [LARGE SCALE GENOMIC DNA]</scope>
    <source>
        <strain>MG1363</strain>
    </source>
</reference>
<comment type="function">
    <text evidence="1">Catalyzes the isomerization between 2-isopropylmalate and 3-isopropylmalate, via the formation of 2-isopropylmaleate.</text>
</comment>
<comment type="catalytic activity">
    <reaction evidence="1">
        <text>(2R,3S)-3-isopropylmalate = (2S)-2-isopropylmalate</text>
        <dbReference type="Rhea" id="RHEA:32287"/>
        <dbReference type="ChEBI" id="CHEBI:1178"/>
        <dbReference type="ChEBI" id="CHEBI:35121"/>
        <dbReference type="EC" id="4.2.1.33"/>
    </reaction>
</comment>
<comment type="cofactor">
    <cofactor evidence="1">
        <name>[4Fe-4S] cluster</name>
        <dbReference type="ChEBI" id="CHEBI:49883"/>
    </cofactor>
    <text evidence="1">Binds 1 [4Fe-4S] cluster per subunit.</text>
</comment>
<comment type="pathway">
    <text evidence="1">Amino-acid biosynthesis; L-leucine biosynthesis; L-leucine from 3-methyl-2-oxobutanoate: step 2/4.</text>
</comment>
<comment type="subunit">
    <text evidence="1">Heterodimer of LeuC and LeuD.</text>
</comment>
<comment type="similarity">
    <text evidence="1">Belongs to the aconitase/IPM isomerase family. LeuC type 1 subfamily.</text>
</comment>
<keyword id="KW-0004">4Fe-4S</keyword>
<keyword id="KW-0028">Amino-acid biosynthesis</keyword>
<keyword id="KW-0100">Branched-chain amino acid biosynthesis</keyword>
<keyword id="KW-0408">Iron</keyword>
<keyword id="KW-0411">Iron-sulfur</keyword>
<keyword id="KW-0432">Leucine biosynthesis</keyword>
<keyword id="KW-0456">Lyase</keyword>
<keyword id="KW-0479">Metal-binding</keyword>
<evidence type="ECO:0000255" key="1">
    <source>
        <dbReference type="HAMAP-Rule" id="MF_01026"/>
    </source>
</evidence>
<protein>
    <recommendedName>
        <fullName evidence="1">3-isopropylmalate dehydratase large subunit</fullName>
        <ecNumber evidence="1">4.2.1.33</ecNumber>
    </recommendedName>
    <alternativeName>
        <fullName evidence="1">Alpha-IPM isomerase</fullName>
        <shortName evidence="1">IPMI</shortName>
    </alternativeName>
    <alternativeName>
        <fullName evidence="1">Isopropylmalate isomerase</fullName>
    </alternativeName>
</protein>
<name>LEUC_LACLM</name>
<proteinExistence type="inferred from homology"/>
<accession>A2RKR3</accession>
<organism>
    <name type="scientific">Lactococcus lactis subsp. cremoris (strain MG1363)</name>
    <dbReference type="NCBI Taxonomy" id="416870"/>
    <lineage>
        <taxon>Bacteria</taxon>
        <taxon>Bacillati</taxon>
        <taxon>Bacillota</taxon>
        <taxon>Bacilli</taxon>
        <taxon>Lactobacillales</taxon>
        <taxon>Streptococcaceae</taxon>
        <taxon>Lactococcus</taxon>
        <taxon>Lactococcus cremoris subsp. cremoris</taxon>
    </lineage>
</organism>
<gene>
    <name evidence="1" type="primary">leuC</name>
    <name type="ordered locus">llmg_1284</name>
</gene>